<accession>P0C6T3</accession>
<gene>
    <name type="primary">Prr7</name>
</gene>
<comment type="function">
    <text evidence="2 6">Acts as a synapse-to-nucleus messenger to promote NMDA receptor-mediated excitotoxicity in neurons in a JUN-dependent manner (PubMed:27458189). Inhibits ubiquitination-mediated degradation and promotes phosphorylation and transcriptional activity of transcription factor JUN (PubMed:27458189). Might play a redundant role in the regulation of T cell receptor signaling (By similarity). Might promote apoptosis in T cells (By similarity).</text>
</comment>
<comment type="subunit">
    <text evidence="2 5 6">Forms a complex with NMDA receptor zeta subunit GRIN1 and epsilon subunit GRIN2B (PubMed:27458189). Interacts with GRIN2B (PubMed:27458189). Interacts with GRIN1; the interaction is reduced upon NMDA receptor activity (PubMed:27458189). Found in a postsynaptic membrane complex with DLG4 and GRIN1 (PubMed:15629447, PubMed:27458189). Interacts with DLG4 (via PDZ3 domain and to lesser degree via PDZ2 domain) (PubMed:15629447, PubMed:27458189). Interacts with FBXW7 (PubMed:27458189). Found in a complex with JUN and FBXW7 (By similarity). Interacts with JUN and FBXW7; the interaction inhibits ubiquitination-mediated JUN degradation promoting its phosphorylation and transcriptional activity (By similarity). Interacts with SRC (By similarity).</text>
</comment>
<comment type="subcellular location">
    <subcellularLocation>
        <location evidence="2">Cell membrane</location>
        <topology evidence="7">Single-pass type III membrane protein</topology>
    </subcellularLocation>
    <subcellularLocation>
        <location evidence="5">Postsynaptic cell membrane</location>
        <topology evidence="7">Single-pass type III membrane protein</topology>
    </subcellularLocation>
    <subcellularLocation>
        <location evidence="5 6">Postsynaptic density membrane</location>
    </subcellularLocation>
    <subcellularLocation>
        <location evidence="2">Cytoplasm</location>
        <location evidence="2">Perinuclear region</location>
    </subcellularLocation>
    <subcellularLocation>
        <location evidence="6">Synapse</location>
    </subcellularLocation>
    <subcellularLocation>
        <location evidence="6">Cell projection</location>
        <location evidence="6">Dendrite</location>
    </subcellularLocation>
    <subcellularLocation>
        <location evidence="6">Nucleus</location>
    </subcellularLocation>
    <text evidence="5 6">Enriched in postsynaptic plasma membrane and postsynaptic densities (PSD) (PubMed:15629447, PubMed:27458189). Accumulates in spines along with synapse maturation and colocalizes with DLG4 in a punctate pattern (PubMed:15629447). Translocates from synapses to nuclei following NMDA receptor activity (PubMed:27458189).</text>
</comment>
<comment type="tissue specificity">
    <text evidence="5 6">Expressed in brain (PubMed:15629447, PubMed:27458189). Expressed in the cerebral cortex and especially in hippocampal neural cells (at protein level) (PubMed:15629447, PubMed:27458189).</text>
</comment>
<comment type="developmental stage">
    <text evidence="6">Expression detected at postnatal day 7 and expression increases until 4 weeks after birth.</text>
</comment>
<comment type="PTM">
    <text evidence="2">Palmitoylated.</text>
</comment>
<comment type="PTM">
    <text evidence="2">Tyrosine phosphorylated, possibly by SRC.</text>
</comment>
<reference key="1">
    <citation type="journal article" date="2004" name="Nature">
        <title>Genome sequence of the Brown Norway rat yields insights into mammalian evolution.</title>
        <authorList>
            <person name="Gibbs R.A."/>
            <person name="Weinstock G.M."/>
            <person name="Metzker M.L."/>
            <person name="Muzny D.M."/>
            <person name="Sodergren E.J."/>
            <person name="Scherer S."/>
            <person name="Scott G."/>
            <person name="Steffen D."/>
            <person name="Worley K.C."/>
            <person name="Burch P.E."/>
            <person name="Okwuonu G."/>
            <person name="Hines S."/>
            <person name="Lewis L."/>
            <person name="Deramo C."/>
            <person name="Delgado O."/>
            <person name="Dugan-Rocha S."/>
            <person name="Miner G."/>
            <person name="Morgan M."/>
            <person name="Hawes A."/>
            <person name="Gill R."/>
            <person name="Holt R.A."/>
            <person name="Adams M.D."/>
            <person name="Amanatides P.G."/>
            <person name="Baden-Tillson H."/>
            <person name="Barnstead M."/>
            <person name="Chin S."/>
            <person name="Evans C.A."/>
            <person name="Ferriera S."/>
            <person name="Fosler C."/>
            <person name="Glodek A."/>
            <person name="Gu Z."/>
            <person name="Jennings D."/>
            <person name="Kraft C.L."/>
            <person name="Nguyen T."/>
            <person name="Pfannkoch C.M."/>
            <person name="Sitter C."/>
            <person name="Sutton G.G."/>
            <person name="Venter J.C."/>
            <person name="Woodage T."/>
            <person name="Smith D."/>
            <person name="Lee H.-M."/>
            <person name="Gustafson E."/>
            <person name="Cahill P."/>
            <person name="Kana A."/>
            <person name="Doucette-Stamm L."/>
            <person name="Weinstock K."/>
            <person name="Fechtel K."/>
            <person name="Weiss R.B."/>
            <person name="Dunn D.M."/>
            <person name="Green E.D."/>
            <person name="Blakesley R.W."/>
            <person name="Bouffard G.G."/>
            <person name="De Jong P.J."/>
            <person name="Osoegawa K."/>
            <person name="Zhu B."/>
            <person name="Marra M."/>
            <person name="Schein J."/>
            <person name="Bosdet I."/>
            <person name="Fjell C."/>
            <person name="Jones S."/>
            <person name="Krzywinski M."/>
            <person name="Mathewson C."/>
            <person name="Siddiqui A."/>
            <person name="Wye N."/>
            <person name="McPherson J."/>
            <person name="Zhao S."/>
            <person name="Fraser C.M."/>
            <person name="Shetty J."/>
            <person name="Shatsman S."/>
            <person name="Geer K."/>
            <person name="Chen Y."/>
            <person name="Abramzon S."/>
            <person name="Nierman W.C."/>
            <person name="Havlak P.H."/>
            <person name="Chen R."/>
            <person name="Durbin K.J."/>
            <person name="Egan A."/>
            <person name="Ren Y."/>
            <person name="Song X.-Z."/>
            <person name="Li B."/>
            <person name="Liu Y."/>
            <person name="Qin X."/>
            <person name="Cawley S."/>
            <person name="Cooney A.J."/>
            <person name="D'Souza L.M."/>
            <person name="Martin K."/>
            <person name="Wu J.Q."/>
            <person name="Gonzalez-Garay M.L."/>
            <person name="Jackson A.R."/>
            <person name="Kalafus K.J."/>
            <person name="McLeod M.P."/>
            <person name="Milosavljevic A."/>
            <person name="Virk D."/>
            <person name="Volkov A."/>
            <person name="Wheeler D.A."/>
            <person name="Zhang Z."/>
            <person name="Bailey J.A."/>
            <person name="Eichler E.E."/>
            <person name="Tuzun E."/>
            <person name="Birney E."/>
            <person name="Mongin E."/>
            <person name="Ureta-Vidal A."/>
            <person name="Woodwark C."/>
            <person name="Zdobnov E."/>
            <person name="Bork P."/>
            <person name="Suyama M."/>
            <person name="Torrents D."/>
            <person name="Alexandersson M."/>
            <person name="Trask B.J."/>
            <person name="Young J.M."/>
            <person name="Huang H."/>
            <person name="Wang H."/>
            <person name="Xing H."/>
            <person name="Daniels S."/>
            <person name="Gietzen D."/>
            <person name="Schmidt J."/>
            <person name="Stevens K."/>
            <person name="Vitt U."/>
            <person name="Wingrove J."/>
            <person name="Camara F."/>
            <person name="Mar Alba M."/>
            <person name="Abril J.F."/>
            <person name="Guigo R."/>
            <person name="Smit A."/>
            <person name="Dubchak I."/>
            <person name="Rubin E.M."/>
            <person name="Couronne O."/>
            <person name="Poliakov A."/>
            <person name="Huebner N."/>
            <person name="Ganten D."/>
            <person name="Goesele C."/>
            <person name="Hummel O."/>
            <person name="Kreitler T."/>
            <person name="Lee Y.-A."/>
            <person name="Monti J."/>
            <person name="Schulz H."/>
            <person name="Zimdahl H."/>
            <person name="Himmelbauer H."/>
            <person name="Lehrach H."/>
            <person name="Jacob H.J."/>
            <person name="Bromberg S."/>
            <person name="Gullings-Handley J."/>
            <person name="Jensen-Seaman M.I."/>
            <person name="Kwitek A.E."/>
            <person name="Lazar J."/>
            <person name="Pasko D."/>
            <person name="Tonellato P.J."/>
            <person name="Twigger S."/>
            <person name="Ponting C.P."/>
            <person name="Duarte J.M."/>
            <person name="Rice S."/>
            <person name="Goodstadt L."/>
            <person name="Beatson S.A."/>
            <person name="Emes R.D."/>
            <person name="Winter E.E."/>
            <person name="Webber C."/>
            <person name="Brandt P."/>
            <person name="Nyakatura G."/>
            <person name="Adetobi M."/>
            <person name="Chiaromonte F."/>
            <person name="Elnitski L."/>
            <person name="Eswara P."/>
            <person name="Hardison R.C."/>
            <person name="Hou M."/>
            <person name="Kolbe D."/>
            <person name="Makova K."/>
            <person name="Miller W."/>
            <person name="Nekrutenko A."/>
            <person name="Riemer C."/>
            <person name="Schwartz S."/>
            <person name="Taylor J."/>
            <person name="Yang S."/>
            <person name="Zhang Y."/>
            <person name="Lindpaintner K."/>
            <person name="Andrews T.D."/>
            <person name="Caccamo M."/>
            <person name="Clamp M."/>
            <person name="Clarke L."/>
            <person name="Curwen V."/>
            <person name="Durbin R.M."/>
            <person name="Eyras E."/>
            <person name="Searle S.M."/>
            <person name="Cooper G.M."/>
            <person name="Batzoglou S."/>
            <person name="Brudno M."/>
            <person name="Sidow A."/>
            <person name="Stone E.A."/>
            <person name="Payseur B.A."/>
            <person name="Bourque G."/>
            <person name="Lopez-Otin C."/>
            <person name="Puente X.S."/>
            <person name="Chakrabarti K."/>
            <person name="Chatterji S."/>
            <person name="Dewey C."/>
            <person name="Pachter L."/>
            <person name="Bray N."/>
            <person name="Yap V.B."/>
            <person name="Caspi A."/>
            <person name="Tesler G."/>
            <person name="Pevzner P.A."/>
            <person name="Haussler D."/>
            <person name="Roskin K.M."/>
            <person name="Baertsch R."/>
            <person name="Clawson H."/>
            <person name="Furey T.S."/>
            <person name="Hinrichs A.S."/>
            <person name="Karolchik D."/>
            <person name="Kent W.J."/>
            <person name="Rosenbloom K.R."/>
            <person name="Trumbower H."/>
            <person name="Weirauch M."/>
            <person name="Cooper D.N."/>
            <person name="Stenson P.D."/>
            <person name="Ma B."/>
            <person name="Brent M."/>
            <person name="Arumugam M."/>
            <person name="Shteynberg D."/>
            <person name="Copley R.R."/>
            <person name="Taylor M.S."/>
            <person name="Riethman H."/>
            <person name="Mudunuri U."/>
            <person name="Peterson J."/>
            <person name="Guyer M."/>
            <person name="Felsenfeld A."/>
            <person name="Old S."/>
            <person name="Mockrin S."/>
            <person name="Collins F.S."/>
        </authorList>
    </citation>
    <scope>NUCLEOTIDE SEQUENCE [LARGE SCALE GENOMIC DNA]</scope>
    <source>
        <strain>Brown Norway</strain>
    </source>
</reference>
<reference key="2">
    <citation type="journal article" date="2005" name="Biochem. Biophys. Res. Commun.">
        <title>Proteomic analysis revealed a novel synaptic proline-rich membrane protein (PRR7) associated with PSD-95 and NMDA receptor.</title>
        <authorList>
            <person name="Murata Y."/>
            <person name="Doi T."/>
            <person name="Taniguchi H."/>
            <person name="Fujiyoshi Y."/>
        </authorList>
    </citation>
    <scope>PROTEIN SEQUENCE OF 174-182; 189-203 AND 234-265</scope>
    <scope>IDENTIFICATION IN A POSTSYNAPTIC MEMBRANE COMPLEX WITH DLG4 AND GRIN1</scope>
    <scope>INTERACTION WITH DLG4</scope>
    <scope>SUBCELLULAR LOCATION</scope>
    <scope>TISSUE SPECIFICITY</scope>
    <source>
        <tissue>Brain</tissue>
    </source>
</reference>
<reference key="3">
    <citation type="journal article" date="2016" name="EMBO J.">
        <title>Synaptonuclear messenger PRR7 inhibits c-Jun ubiquitination and regulates NMDA-mediated excitotoxicity.</title>
        <authorList>
            <person name="Kravchick D.O."/>
            <person name="Karpova A."/>
            <person name="Hrdinka M."/>
            <person name="Lopez-Rojas J."/>
            <person name="Iacobas S."/>
            <person name="Carbonell A.U."/>
            <person name="Iacobas D.A."/>
            <person name="Kreutz M.R."/>
            <person name="Jordan B.A."/>
        </authorList>
    </citation>
    <scope>FUNCTION</scope>
    <scope>IDENTIFICATION IN COMPLEX WITH DLG4 AND GRIN1</scope>
    <scope>IDENTIFICATION IN A COMPLEX WITH GRIN1 AND GRIN2B</scope>
    <scope>INTERACTION WITH DLG4; GRIN1; GRIN2B AND FBXW7</scope>
    <scope>SUBCELLULAR LOCATION</scope>
    <scope>TISSUE SPECIFICITY</scope>
    <scope>DEVELOPMENTAL STAGE</scope>
    <scope>MUTAGENESIS OF 39-LYS--ARG-47</scope>
</reference>
<organism>
    <name type="scientific">Rattus norvegicus</name>
    <name type="common">Rat</name>
    <dbReference type="NCBI Taxonomy" id="10116"/>
    <lineage>
        <taxon>Eukaryota</taxon>
        <taxon>Metazoa</taxon>
        <taxon>Chordata</taxon>
        <taxon>Craniata</taxon>
        <taxon>Vertebrata</taxon>
        <taxon>Euteleostomi</taxon>
        <taxon>Mammalia</taxon>
        <taxon>Eutheria</taxon>
        <taxon>Euarchontoglires</taxon>
        <taxon>Glires</taxon>
        <taxon>Rodentia</taxon>
        <taxon>Myomorpha</taxon>
        <taxon>Muroidea</taxon>
        <taxon>Muridae</taxon>
        <taxon>Murinae</taxon>
        <taxon>Rattus</taxon>
    </lineage>
</organism>
<dbReference type="EMBL" id="AABR03104952">
    <property type="status" value="NOT_ANNOTATED_CDS"/>
    <property type="molecule type" value="Genomic_DNA"/>
</dbReference>
<dbReference type="RefSeq" id="NP_001102586.1">
    <property type="nucleotide sequence ID" value="NM_001109116.1"/>
</dbReference>
<dbReference type="RefSeq" id="XP_006253714.1">
    <property type="nucleotide sequence ID" value="XM_006253652.5"/>
</dbReference>
<dbReference type="RefSeq" id="XP_017456132.1">
    <property type="nucleotide sequence ID" value="XM_017600643.1"/>
</dbReference>
<dbReference type="RefSeq" id="XP_063132757.1">
    <property type="nucleotide sequence ID" value="XM_063276687.1"/>
</dbReference>
<dbReference type="SMR" id="P0C6T3"/>
<dbReference type="BioGRID" id="270014">
    <property type="interactions" value="2"/>
</dbReference>
<dbReference type="CORUM" id="P0C6T3"/>
<dbReference type="FunCoup" id="P0C6T3">
    <property type="interactions" value="254"/>
</dbReference>
<dbReference type="STRING" id="10116.ENSRNOP00000038274"/>
<dbReference type="PhosphoSitePlus" id="P0C6T3"/>
<dbReference type="PaxDb" id="10116-ENSRNOP00000038274"/>
<dbReference type="Ensembl" id="ENSRNOT00000036162.5">
    <property type="protein sequence ID" value="ENSRNOP00000038274.4"/>
    <property type="gene ID" value="ENSRNOG00000021447.5"/>
</dbReference>
<dbReference type="GeneID" id="498704"/>
<dbReference type="KEGG" id="rno:498704"/>
<dbReference type="UCSC" id="RGD:1561898">
    <property type="organism name" value="rat"/>
</dbReference>
<dbReference type="AGR" id="RGD:1561898"/>
<dbReference type="CTD" id="80758"/>
<dbReference type="RGD" id="1561898">
    <property type="gene designation" value="Prr7"/>
</dbReference>
<dbReference type="eggNOG" id="ENOG502RA5T">
    <property type="taxonomic scope" value="Eukaryota"/>
</dbReference>
<dbReference type="GeneTree" id="ENSGT00950000183109"/>
<dbReference type="HOGENOM" id="CLU_081607_0_0_1"/>
<dbReference type="InParanoid" id="P0C6T3"/>
<dbReference type="OMA" id="IVMVCCF"/>
<dbReference type="OrthoDB" id="8897120at2759"/>
<dbReference type="PhylomeDB" id="P0C6T3"/>
<dbReference type="TreeFam" id="TF332076"/>
<dbReference type="PRO" id="PR:P0C6T3"/>
<dbReference type="Proteomes" id="UP000002494">
    <property type="component" value="Chromosome 17"/>
</dbReference>
<dbReference type="Bgee" id="ENSRNOG00000021447">
    <property type="expression patterns" value="Expressed in frontal cortex and 17 other cell types or tissues"/>
</dbReference>
<dbReference type="GO" id="GO:0005829">
    <property type="term" value="C:cytosol"/>
    <property type="evidence" value="ECO:0007669"/>
    <property type="project" value="Ensembl"/>
</dbReference>
<dbReference type="GO" id="GO:0030425">
    <property type="term" value="C:dendrite"/>
    <property type="evidence" value="ECO:0007669"/>
    <property type="project" value="UniProtKB-SubCell"/>
</dbReference>
<dbReference type="GO" id="GO:0098978">
    <property type="term" value="C:glutamatergic synapse"/>
    <property type="evidence" value="ECO:0000314"/>
    <property type="project" value="SynGO"/>
</dbReference>
<dbReference type="GO" id="GO:0043005">
    <property type="term" value="C:neuron projection"/>
    <property type="evidence" value="ECO:0000314"/>
    <property type="project" value="UniProtKB"/>
</dbReference>
<dbReference type="GO" id="GO:0005654">
    <property type="term" value="C:nucleoplasm"/>
    <property type="evidence" value="ECO:0007669"/>
    <property type="project" value="Ensembl"/>
</dbReference>
<dbReference type="GO" id="GO:0005634">
    <property type="term" value="C:nucleus"/>
    <property type="evidence" value="ECO:0000314"/>
    <property type="project" value="UniProtKB"/>
</dbReference>
<dbReference type="GO" id="GO:0048471">
    <property type="term" value="C:perinuclear region of cytoplasm"/>
    <property type="evidence" value="ECO:0000250"/>
    <property type="project" value="UniProtKB"/>
</dbReference>
<dbReference type="GO" id="GO:0005886">
    <property type="term" value="C:plasma membrane"/>
    <property type="evidence" value="ECO:0000250"/>
    <property type="project" value="UniProtKB"/>
</dbReference>
<dbReference type="GO" id="GO:0014069">
    <property type="term" value="C:postsynaptic density"/>
    <property type="evidence" value="ECO:0000314"/>
    <property type="project" value="UniProtKB"/>
</dbReference>
<dbReference type="GO" id="GO:0098839">
    <property type="term" value="C:postsynaptic density membrane"/>
    <property type="evidence" value="ECO:0007669"/>
    <property type="project" value="UniProtKB-SubCell"/>
</dbReference>
<dbReference type="GO" id="GO:0099092">
    <property type="term" value="C:postsynaptic density, intracellular component"/>
    <property type="evidence" value="ECO:0000314"/>
    <property type="project" value="SynGO"/>
</dbReference>
<dbReference type="GO" id="GO:0045202">
    <property type="term" value="C:synapse"/>
    <property type="evidence" value="ECO:0000314"/>
    <property type="project" value="UniProtKB"/>
</dbReference>
<dbReference type="GO" id="GO:0036041">
    <property type="term" value="F:long-chain fatty acid binding"/>
    <property type="evidence" value="ECO:0000250"/>
    <property type="project" value="UniProtKB"/>
</dbReference>
<dbReference type="GO" id="GO:1990782">
    <property type="term" value="F:protein tyrosine kinase binding"/>
    <property type="evidence" value="ECO:0000266"/>
    <property type="project" value="RGD"/>
</dbReference>
<dbReference type="GO" id="GO:0044877">
    <property type="term" value="F:protein-containing complex binding"/>
    <property type="evidence" value="ECO:0000353"/>
    <property type="project" value="UniProtKB"/>
</dbReference>
<dbReference type="GO" id="GO:0044389">
    <property type="term" value="F:ubiquitin-like protein ligase binding"/>
    <property type="evidence" value="ECO:0000266"/>
    <property type="project" value="RGD"/>
</dbReference>
<dbReference type="GO" id="GO:0002250">
    <property type="term" value="P:adaptive immune response"/>
    <property type="evidence" value="ECO:0007669"/>
    <property type="project" value="UniProtKB-KW"/>
</dbReference>
<dbReference type="GO" id="GO:0046632">
    <property type="term" value="P:alpha-beta T cell differentiation"/>
    <property type="evidence" value="ECO:0000266"/>
    <property type="project" value="RGD"/>
</dbReference>
<dbReference type="GO" id="GO:0043065">
    <property type="term" value="P:positive regulation of apoptotic process"/>
    <property type="evidence" value="ECO:0000250"/>
    <property type="project" value="UniProtKB"/>
</dbReference>
<dbReference type="GO" id="GO:0099527">
    <property type="term" value="P:postsynapse to nucleus signaling pathway"/>
    <property type="evidence" value="ECO:0000314"/>
    <property type="project" value="SynGO"/>
</dbReference>
<dbReference type="GO" id="GO:0006356">
    <property type="term" value="P:regulation of transcription by RNA polymerase I"/>
    <property type="evidence" value="ECO:0000315"/>
    <property type="project" value="UniProtKB"/>
</dbReference>
<dbReference type="GO" id="GO:0033077">
    <property type="term" value="P:T cell differentiation in thymus"/>
    <property type="evidence" value="ECO:0000266"/>
    <property type="project" value="RGD"/>
</dbReference>
<dbReference type="InterPro" id="IPR051994">
    <property type="entry name" value="WW_domain-binding"/>
</dbReference>
<dbReference type="PANTHER" id="PTHR16209:SF3">
    <property type="entry name" value="PROLINE-RICH PROTEIN 7"/>
    <property type="match status" value="1"/>
</dbReference>
<dbReference type="PANTHER" id="PTHR16209">
    <property type="entry name" value="VESICULAR, OVEREXPRESSED IN CANCER, PROSURVIVAL PROTEIN 1"/>
    <property type="match status" value="1"/>
</dbReference>
<name>PRR7_RAT</name>
<proteinExistence type="evidence at protein level"/>
<feature type="chain" id="PRO_0000328651" description="Proline-rich protein 7">
    <location>
        <begin position="1"/>
        <end position="269"/>
    </location>
</feature>
<feature type="topological domain" description="Extracellular" evidence="3">
    <location>
        <begin position="1"/>
        <end position="9"/>
    </location>
</feature>
<feature type="transmembrane region" description="Helical; Signal-anchor for type III membrane protein" evidence="3">
    <location>
        <begin position="10"/>
        <end position="30"/>
    </location>
</feature>
<feature type="topological domain" description="Cytoplasmic" evidence="3">
    <location>
        <begin position="31"/>
        <end position="269"/>
    </location>
</feature>
<feature type="region of interest" description="Required for interaction with NMDA receptors" evidence="6">
    <location>
        <begin position="1"/>
        <end position="44"/>
    </location>
</feature>
<feature type="region of interest" description="Required for membrane localization" evidence="2">
    <location>
        <begin position="2"/>
        <end position="39"/>
    </location>
</feature>
<feature type="region of interest" description="Disordered" evidence="4">
    <location>
        <begin position="64"/>
        <end position="83"/>
    </location>
</feature>
<feature type="region of interest" description="Disordered" evidence="4">
    <location>
        <begin position="98"/>
        <end position="128"/>
    </location>
</feature>
<feature type="region of interest" description="Required for apoptosis induction" evidence="2">
    <location>
        <begin position="146"/>
        <end position="269"/>
    </location>
</feature>
<feature type="region of interest" description="Required for internalization" evidence="2">
    <location>
        <begin position="146"/>
        <end position="166"/>
    </location>
</feature>
<feature type="short sequence motif" description="PDZ-binding">
    <location>
        <begin position="267"/>
        <end position="269"/>
    </location>
</feature>
<feature type="compositionally biased region" description="Basic residues" evidence="4">
    <location>
        <begin position="108"/>
        <end position="117"/>
    </location>
</feature>
<feature type="compositionally biased region" description="Pro residues" evidence="4">
    <location>
        <begin position="118"/>
        <end position="128"/>
    </location>
</feature>
<feature type="modified residue" description="Phosphoserine" evidence="1">
    <location>
        <position position="64"/>
    </location>
</feature>
<feature type="mutagenesis site" description="Loss of nuclear localization and loss of apoptosis induction." evidence="6">
    <original>KRRQEERLR</original>
    <variation>AAAQEEALA</variation>
    <location>
        <begin position="39"/>
        <end position="47"/>
    </location>
</feature>
<keyword id="KW-1064">Adaptive immunity</keyword>
<keyword id="KW-1003">Cell membrane</keyword>
<keyword id="KW-0966">Cell projection</keyword>
<keyword id="KW-0963">Cytoplasm</keyword>
<keyword id="KW-0903">Direct protein sequencing</keyword>
<keyword id="KW-0391">Immunity</keyword>
<keyword id="KW-0449">Lipoprotein</keyword>
<keyword id="KW-0472">Membrane</keyword>
<keyword id="KW-0539">Nucleus</keyword>
<keyword id="KW-0564">Palmitate</keyword>
<keyword id="KW-0597">Phosphoprotein</keyword>
<keyword id="KW-0628">Postsynaptic cell membrane</keyword>
<keyword id="KW-1185">Reference proteome</keyword>
<keyword id="KW-0735">Signal-anchor</keyword>
<keyword id="KW-0770">Synapse</keyword>
<keyword id="KW-0812">Transmembrane</keyword>
<keyword id="KW-1133">Transmembrane helix</keyword>
<sequence>MVMSQGTYTFLTCFAGFWLIWGLIVLLCCFCSFLRRRLKRRQEERLREQNLRALELEPLELEGSLAGSPPGLAPPPPPHRSRLEAPVHAHSHVHVHPLLHHGPAQPHAHPHPHHHALPHPPPSHLSVPPRPWSYPRQAESDMSKPPCYEEAVLMAEPPPPYSEVLTDTRGLYRKIVTPFLSRRDSAEKQEQPPPSYKPLFLDRGYTSALHLPSAPRPAAPCPALCLQADRSRRVFPSWTDSELSSREPLEHGAWRLPVSIPLFGRTTAV</sequence>
<protein>
    <recommendedName>
        <fullName>Proline-rich protein 7</fullName>
    </recommendedName>
    <alternativeName>
        <fullName>Synaptic proline-rich membrane protein</fullName>
    </alternativeName>
</protein>
<evidence type="ECO:0000250" key="1">
    <source>
        <dbReference type="UniProtKB" id="Q3V0I2"/>
    </source>
</evidence>
<evidence type="ECO:0000250" key="2">
    <source>
        <dbReference type="UniProtKB" id="Q8TB68"/>
    </source>
</evidence>
<evidence type="ECO:0000255" key="3"/>
<evidence type="ECO:0000256" key="4">
    <source>
        <dbReference type="SAM" id="MobiDB-lite"/>
    </source>
</evidence>
<evidence type="ECO:0000269" key="5">
    <source>
    </source>
</evidence>
<evidence type="ECO:0000269" key="6">
    <source>
    </source>
</evidence>
<evidence type="ECO:0000305" key="7"/>